<keyword id="KW-0687">Ribonucleoprotein</keyword>
<keyword id="KW-0689">Ribosomal protein</keyword>
<proteinExistence type="inferred from homology"/>
<evidence type="ECO:0000305" key="1"/>
<feature type="chain" id="PRO_0000130372" description="Large ribosomal subunit protein uL29">
    <location>
        <begin position="1"/>
        <end position="72"/>
    </location>
</feature>
<protein>
    <recommendedName>
        <fullName evidence="1">Large ribosomal subunit protein uL29</fullName>
    </recommendedName>
    <alternativeName>
        <fullName>50S ribosomal protein L29</fullName>
    </alternativeName>
</protein>
<comment type="similarity">
    <text evidence="1">Belongs to the universal ribosomal protein uL29 family.</text>
</comment>
<dbReference type="EMBL" id="AE002160">
    <property type="protein sequence ID" value="AAF39610.1"/>
    <property type="molecule type" value="Genomic_DNA"/>
</dbReference>
<dbReference type="PIR" id="G81664">
    <property type="entry name" value="G81664"/>
</dbReference>
<dbReference type="RefSeq" id="WP_010231628.1">
    <property type="nucleotide sequence ID" value="NZ_CP063055.1"/>
</dbReference>
<dbReference type="SMR" id="Q9PJM2"/>
<dbReference type="GeneID" id="1246174"/>
<dbReference type="KEGG" id="cmu:TC_0807"/>
<dbReference type="eggNOG" id="COG0255">
    <property type="taxonomic scope" value="Bacteria"/>
</dbReference>
<dbReference type="HOGENOM" id="CLU_2715043_0_0_0"/>
<dbReference type="OrthoDB" id="18593at2"/>
<dbReference type="Proteomes" id="UP000000800">
    <property type="component" value="Chromosome"/>
</dbReference>
<dbReference type="GO" id="GO:0022625">
    <property type="term" value="C:cytosolic large ribosomal subunit"/>
    <property type="evidence" value="ECO:0007669"/>
    <property type="project" value="TreeGrafter"/>
</dbReference>
<dbReference type="GO" id="GO:0003735">
    <property type="term" value="F:structural constituent of ribosome"/>
    <property type="evidence" value="ECO:0007669"/>
    <property type="project" value="InterPro"/>
</dbReference>
<dbReference type="GO" id="GO:0006412">
    <property type="term" value="P:translation"/>
    <property type="evidence" value="ECO:0007669"/>
    <property type="project" value="UniProtKB-UniRule"/>
</dbReference>
<dbReference type="CDD" id="cd00427">
    <property type="entry name" value="Ribosomal_L29_HIP"/>
    <property type="match status" value="1"/>
</dbReference>
<dbReference type="FunFam" id="1.10.287.310:FF:000001">
    <property type="entry name" value="50S ribosomal protein L29"/>
    <property type="match status" value="1"/>
</dbReference>
<dbReference type="Gene3D" id="1.10.287.310">
    <property type="match status" value="1"/>
</dbReference>
<dbReference type="HAMAP" id="MF_00374">
    <property type="entry name" value="Ribosomal_uL29"/>
    <property type="match status" value="1"/>
</dbReference>
<dbReference type="InterPro" id="IPR050063">
    <property type="entry name" value="Ribosomal_protein_uL29"/>
</dbReference>
<dbReference type="InterPro" id="IPR001854">
    <property type="entry name" value="Ribosomal_uL29"/>
</dbReference>
<dbReference type="InterPro" id="IPR018254">
    <property type="entry name" value="Ribosomal_uL29_CS"/>
</dbReference>
<dbReference type="InterPro" id="IPR036049">
    <property type="entry name" value="Ribosomal_uL29_sf"/>
</dbReference>
<dbReference type="NCBIfam" id="TIGR00012">
    <property type="entry name" value="L29"/>
    <property type="match status" value="1"/>
</dbReference>
<dbReference type="PANTHER" id="PTHR10916">
    <property type="entry name" value="60S RIBOSOMAL PROTEIN L35/50S RIBOSOMAL PROTEIN L29"/>
    <property type="match status" value="1"/>
</dbReference>
<dbReference type="PANTHER" id="PTHR10916:SF0">
    <property type="entry name" value="LARGE RIBOSOMAL SUBUNIT PROTEIN UL29C"/>
    <property type="match status" value="1"/>
</dbReference>
<dbReference type="Pfam" id="PF00831">
    <property type="entry name" value="Ribosomal_L29"/>
    <property type="match status" value="1"/>
</dbReference>
<dbReference type="SUPFAM" id="SSF46561">
    <property type="entry name" value="Ribosomal protein L29 (L29p)"/>
    <property type="match status" value="1"/>
</dbReference>
<dbReference type="PROSITE" id="PS00579">
    <property type="entry name" value="RIBOSOMAL_L29"/>
    <property type="match status" value="1"/>
</dbReference>
<reference key="1">
    <citation type="journal article" date="2000" name="Nucleic Acids Res.">
        <title>Genome sequences of Chlamydia trachomatis MoPn and Chlamydia pneumoniae AR39.</title>
        <authorList>
            <person name="Read T.D."/>
            <person name="Brunham R.C."/>
            <person name="Shen C."/>
            <person name="Gill S.R."/>
            <person name="Heidelberg J.F."/>
            <person name="White O."/>
            <person name="Hickey E.K."/>
            <person name="Peterson J.D."/>
            <person name="Utterback T.R."/>
            <person name="Berry K.J."/>
            <person name="Bass S."/>
            <person name="Linher K.D."/>
            <person name="Weidman J.F."/>
            <person name="Khouri H.M."/>
            <person name="Craven B."/>
            <person name="Bowman C."/>
            <person name="Dodson R.J."/>
            <person name="Gwinn M.L."/>
            <person name="Nelson W.C."/>
            <person name="DeBoy R.T."/>
            <person name="Kolonay J.F."/>
            <person name="McClarty G."/>
            <person name="Salzberg S.L."/>
            <person name="Eisen J.A."/>
            <person name="Fraser C.M."/>
        </authorList>
    </citation>
    <scope>NUCLEOTIDE SEQUENCE [LARGE SCALE GENOMIC DNA]</scope>
    <source>
        <strain>MoPn / Nigg</strain>
    </source>
</reference>
<accession>Q9PJM2</accession>
<organism>
    <name type="scientific">Chlamydia muridarum (strain MoPn / Nigg)</name>
    <dbReference type="NCBI Taxonomy" id="243161"/>
    <lineage>
        <taxon>Bacteria</taxon>
        <taxon>Pseudomonadati</taxon>
        <taxon>Chlamydiota</taxon>
        <taxon>Chlamydiia</taxon>
        <taxon>Chlamydiales</taxon>
        <taxon>Chlamydiaceae</taxon>
        <taxon>Chlamydia/Chlamydophila group</taxon>
        <taxon>Chlamydia</taxon>
    </lineage>
</organism>
<sequence length="72" mass="8285">MGAKKNLLAELREKSSEELDEFIRDNKKALFTLRAEAALQNKAVKTHQFSLYKKSIARALTIKQEKKDRVHG</sequence>
<name>RL29_CHLMU</name>
<gene>
    <name type="primary">rpmC</name>
    <name type="ordered locus">TC_0807</name>
</gene>